<organism>
    <name type="scientific">Mus musculus</name>
    <name type="common">Mouse</name>
    <dbReference type="NCBI Taxonomy" id="10090"/>
    <lineage>
        <taxon>Eukaryota</taxon>
        <taxon>Metazoa</taxon>
        <taxon>Chordata</taxon>
        <taxon>Craniata</taxon>
        <taxon>Vertebrata</taxon>
        <taxon>Euteleostomi</taxon>
        <taxon>Mammalia</taxon>
        <taxon>Eutheria</taxon>
        <taxon>Euarchontoglires</taxon>
        <taxon>Glires</taxon>
        <taxon>Rodentia</taxon>
        <taxon>Myomorpha</taxon>
        <taxon>Muroidea</taxon>
        <taxon>Muridae</taxon>
        <taxon>Murinae</taxon>
        <taxon>Mus</taxon>
        <taxon>Mus</taxon>
    </lineage>
</organism>
<comment type="function">
    <text evidence="1">Component of the adaptor protein complex 4 (AP-4). Adaptor protein complexes are vesicle coat components involved both in vesicle formation and cargo selection. They control the vesicular transport of proteins in different trafficking pathways. AP-4 forms a non clathrin-associated coat on vesicles departing the trans-Golgi network (TGN) and may be involved in the targeting of proteins from the trans-Golgi network (TGN) to the endosomal-lysosomal system. It is also involved in protein sorting to the basolateral membrane in epithelial cells and the proper asymmetric localization of somatodendritic proteins in neurons. AP-4 is involved in the recognition and binding of tyrosine-based sorting signals found in the cytoplasmic part of cargos, but may also recognize other types of sorting signal.</text>
</comment>
<comment type="subunit">
    <text evidence="1">Adaptor protein complex 4 (AP-4) is a heterotetramer composed of two large adaptins (epsilon-type subunit AP4E1 and beta-type subunit AP4B1), a medium adaptin (mu-type subunit AP4M1) and a small adaptin (sigma-type AP4S1).</text>
</comment>
<comment type="subcellular location">
    <subcellularLocation>
        <location evidence="1">Golgi apparatus</location>
        <location evidence="1">trans-Golgi network membrane</location>
        <topology evidence="1">Peripheral membrane protein</topology>
    </subcellularLocation>
</comment>
<comment type="similarity">
    <text evidence="2">Belongs to the adaptor complexes small subunit family.</text>
</comment>
<dbReference type="EMBL" id="AF092093">
    <property type="protein sequence ID" value="AAD20447.1"/>
    <property type="molecule type" value="mRNA"/>
</dbReference>
<dbReference type="EMBL" id="AK005283">
    <property type="protein sequence ID" value="BAB23931.1"/>
    <property type="molecule type" value="mRNA"/>
</dbReference>
<dbReference type="EMBL" id="BC053339">
    <property type="protein sequence ID" value="AAH53339.1"/>
    <property type="molecule type" value="mRNA"/>
</dbReference>
<dbReference type="CCDS" id="CCDS36441.1"/>
<dbReference type="RefSeq" id="NP_068356.1">
    <property type="nucleotide sequence ID" value="NM_021710.4"/>
</dbReference>
<dbReference type="RefSeq" id="XP_017170429.1">
    <property type="nucleotide sequence ID" value="XM_017314940.1"/>
</dbReference>
<dbReference type="RefSeq" id="XP_017170430.1">
    <property type="nucleotide sequence ID" value="XM_017314941.1"/>
</dbReference>
<dbReference type="SMR" id="Q9WVL1"/>
<dbReference type="BioGRID" id="198138">
    <property type="interactions" value="1"/>
</dbReference>
<dbReference type="ComplexPortal" id="CPX-5154">
    <property type="entry name" value="AP-4 Adaptor complex"/>
</dbReference>
<dbReference type="FunCoup" id="Q9WVL1">
    <property type="interactions" value="1021"/>
</dbReference>
<dbReference type="STRING" id="10090.ENSMUSP00000021338"/>
<dbReference type="PhosphoSitePlus" id="Q9WVL1"/>
<dbReference type="jPOST" id="Q9WVL1"/>
<dbReference type="PaxDb" id="10090-ENSMUSP00000021338"/>
<dbReference type="PeptideAtlas" id="Q9WVL1"/>
<dbReference type="ProteomicsDB" id="281788"/>
<dbReference type="Pumba" id="Q9WVL1"/>
<dbReference type="Antibodypedia" id="51162">
    <property type="antibodies" value="29 antibodies from 10 providers"/>
</dbReference>
<dbReference type="DNASU" id="11782"/>
<dbReference type="Ensembl" id="ENSMUST00000021338.10">
    <property type="protein sequence ID" value="ENSMUSP00000021338.9"/>
    <property type="gene ID" value="ENSMUSG00000020955.10"/>
</dbReference>
<dbReference type="GeneID" id="11782"/>
<dbReference type="KEGG" id="mmu:11782"/>
<dbReference type="UCSC" id="uc007nmv.2">
    <property type="organism name" value="mouse"/>
</dbReference>
<dbReference type="AGR" id="MGI:1337065"/>
<dbReference type="CTD" id="11154"/>
<dbReference type="MGI" id="MGI:1337065">
    <property type="gene designation" value="Ap4s1"/>
</dbReference>
<dbReference type="VEuPathDB" id="HostDB:ENSMUSG00000020955"/>
<dbReference type="eggNOG" id="KOG0934">
    <property type="taxonomic scope" value="Eukaryota"/>
</dbReference>
<dbReference type="GeneTree" id="ENSGT00970000193421"/>
<dbReference type="HOGENOM" id="CLU_061221_4_0_1"/>
<dbReference type="InParanoid" id="Q9WVL1"/>
<dbReference type="OMA" id="GHVVETN"/>
<dbReference type="OrthoDB" id="371463at2759"/>
<dbReference type="PhylomeDB" id="Q9WVL1"/>
<dbReference type="TreeFam" id="TF331913"/>
<dbReference type="Reactome" id="R-MMU-432720">
    <property type="pathway name" value="Lysosome Vesicle Biogenesis"/>
</dbReference>
<dbReference type="BioGRID-ORCS" id="11782">
    <property type="hits" value="2 hits in 76 CRISPR screens"/>
</dbReference>
<dbReference type="ChiTaRS" id="Ap4s1">
    <property type="organism name" value="mouse"/>
</dbReference>
<dbReference type="PRO" id="PR:Q9WVL1"/>
<dbReference type="Proteomes" id="UP000000589">
    <property type="component" value="Chromosome 12"/>
</dbReference>
<dbReference type="RNAct" id="Q9WVL1">
    <property type="molecule type" value="protein"/>
</dbReference>
<dbReference type="Bgee" id="ENSMUSG00000020955">
    <property type="expression patterns" value="Expressed in intercostal muscle and 260 other cell types or tissues"/>
</dbReference>
<dbReference type="ExpressionAtlas" id="Q9WVL1">
    <property type="expression patterns" value="baseline and differential"/>
</dbReference>
<dbReference type="GO" id="GO:0030124">
    <property type="term" value="C:AP-4 adaptor complex"/>
    <property type="evidence" value="ECO:0000250"/>
    <property type="project" value="UniProtKB"/>
</dbReference>
<dbReference type="GO" id="GO:0005802">
    <property type="term" value="C:trans-Golgi network"/>
    <property type="evidence" value="ECO:0000304"/>
    <property type="project" value="MGI"/>
</dbReference>
<dbReference type="GO" id="GO:0006886">
    <property type="term" value="P:intracellular protein transport"/>
    <property type="evidence" value="ECO:0000304"/>
    <property type="project" value="MGI"/>
</dbReference>
<dbReference type="GO" id="GO:0016192">
    <property type="term" value="P:vesicle-mediated transport"/>
    <property type="evidence" value="ECO:0000304"/>
    <property type="project" value="MGI"/>
</dbReference>
<dbReference type="CDD" id="cd14832">
    <property type="entry name" value="AP4_sigma"/>
    <property type="match status" value="1"/>
</dbReference>
<dbReference type="FunFam" id="3.30.450.60:FF:000010">
    <property type="entry name" value="AP complex subunit sigma"/>
    <property type="match status" value="1"/>
</dbReference>
<dbReference type="Gene3D" id="3.30.450.60">
    <property type="match status" value="1"/>
</dbReference>
<dbReference type="InterPro" id="IPR016635">
    <property type="entry name" value="AP_complex_ssu"/>
</dbReference>
<dbReference type="InterPro" id="IPR022775">
    <property type="entry name" value="AP_mu_sigma_su"/>
</dbReference>
<dbReference type="InterPro" id="IPR011012">
    <property type="entry name" value="Longin-like_dom_sf"/>
</dbReference>
<dbReference type="PANTHER" id="PTHR11753">
    <property type="entry name" value="ADAPTOR COMPLEXES SMALL SUBUNIT FAMILY"/>
    <property type="match status" value="1"/>
</dbReference>
<dbReference type="Pfam" id="PF01217">
    <property type="entry name" value="Clat_adaptor_s"/>
    <property type="match status" value="1"/>
</dbReference>
<dbReference type="PIRSF" id="PIRSF015588">
    <property type="entry name" value="AP_complex_sigma"/>
    <property type="match status" value="1"/>
</dbReference>
<dbReference type="SUPFAM" id="SSF64356">
    <property type="entry name" value="SNARE-like"/>
    <property type="match status" value="1"/>
</dbReference>
<evidence type="ECO:0000250" key="1">
    <source>
        <dbReference type="UniProtKB" id="Q9Y587"/>
    </source>
</evidence>
<evidence type="ECO:0000305" key="2"/>
<evidence type="ECO:0000312" key="3">
    <source>
        <dbReference type="MGI" id="MGI:1337065"/>
    </source>
</evidence>
<feature type="chain" id="PRO_0000193821" description="AP-4 complex subunit sigma-1">
    <location>
        <begin position="1"/>
        <end position="144"/>
    </location>
</feature>
<protein>
    <recommendedName>
        <fullName evidence="2">AP-4 complex subunit sigma-1</fullName>
    </recommendedName>
    <alternativeName>
        <fullName>AP-4 adaptor complex subunit sigma-1</fullName>
    </alternativeName>
    <alternativeName>
        <fullName>Adaptor-related protein complex 4 subunit sigma-1</fullName>
    </alternativeName>
    <alternativeName>
        <fullName>Sigma-1 subunit of AP-4</fullName>
    </alternativeName>
    <alternativeName>
        <fullName>Sigma-4-adaptin</fullName>
        <shortName>Sigma4-adaptin</shortName>
    </alternativeName>
</protein>
<proteinExistence type="evidence at transcript level"/>
<sequence length="144" mass="16818">MIKFFLMVNKQGQTRLSKYYEHVDINKRALLETEVSKSCLSRSSEQCSFIEYKDFKLIYRQYAALFVVVGVNDTENEMAIYEFIHNFVEVLDGYFSRVSELDIMFNLDKVHIILDEMVLNGCIVETNRARILAPLLILDKLSES</sequence>
<keyword id="KW-0333">Golgi apparatus</keyword>
<keyword id="KW-0472">Membrane</keyword>
<keyword id="KW-0653">Protein transport</keyword>
<keyword id="KW-1185">Reference proteome</keyword>
<keyword id="KW-0813">Transport</keyword>
<accession>Q9WVL1</accession>
<reference key="1">
    <citation type="journal article" date="1999" name="J. Biol. Chem.">
        <title>AP-4, a novel protein complex related to clathrin adaptors.</title>
        <authorList>
            <person name="Dell'Angelica E.C."/>
            <person name="Mullins C."/>
            <person name="Bonifacino J.S."/>
        </authorList>
    </citation>
    <scope>NUCLEOTIDE SEQUENCE [MRNA]</scope>
    <source>
        <tissue>Placenta</tissue>
    </source>
</reference>
<reference key="2">
    <citation type="journal article" date="2005" name="Science">
        <title>The transcriptional landscape of the mammalian genome.</title>
        <authorList>
            <person name="Carninci P."/>
            <person name="Kasukawa T."/>
            <person name="Katayama S."/>
            <person name="Gough J."/>
            <person name="Frith M.C."/>
            <person name="Maeda N."/>
            <person name="Oyama R."/>
            <person name="Ravasi T."/>
            <person name="Lenhard B."/>
            <person name="Wells C."/>
            <person name="Kodzius R."/>
            <person name="Shimokawa K."/>
            <person name="Bajic V.B."/>
            <person name="Brenner S.E."/>
            <person name="Batalov S."/>
            <person name="Forrest A.R."/>
            <person name="Zavolan M."/>
            <person name="Davis M.J."/>
            <person name="Wilming L.G."/>
            <person name="Aidinis V."/>
            <person name="Allen J.E."/>
            <person name="Ambesi-Impiombato A."/>
            <person name="Apweiler R."/>
            <person name="Aturaliya R.N."/>
            <person name="Bailey T.L."/>
            <person name="Bansal M."/>
            <person name="Baxter L."/>
            <person name="Beisel K.W."/>
            <person name="Bersano T."/>
            <person name="Bono H."/>
            <person name="Chalk A.M."/>
            <person name="Chiu K.P."/>
            <person name="Choudhary V."/>
            <person name="Christoffels A."/>
            <person name="Clutterbuck D.R."/>
            <person name="Crowe M.L."/>
            <person name="Dalla E."/>
            <person name="Dalrymple B.P."/>
            <person name="de Bono B."/>
            <person name="Della Gatta G."/>
            <person name="di Bernardo D."/>
            <person name="Down T."/>
            <person name="Engstrom P."/>
            <person name="Fagiolini M."/>
            <person name="Faulkner G."/>
            <person name="Fletcher C.F."/>
            <person name="Fukushima T."/>
            <person name="Furuno M."/>
            <person name="Futaki S."/>
            <person name="Gariboldi M."/>
            <person name="Georgii-Hemming P."/>
            <person name="Gingeras T.R."/>
            <person name="Gojobori T."/>
            <person name="Green R.E."/>
            <person name="Gustincich S."/>
            <person name="Harbers M."/>
            <person name="Hayashi Y."/>
            <person name="Hensch T.K."/>
            <person name="Hirokawa N."/>
            <person name="Hill D."/>
            <person name="Huminiecki L."/>
            <person name="Iacono M."/>
            <person name="Ikeo K."/>
            <person name="Iwama A."/>
            <person name="Ishikawa T."/>
            <person name="Jakt M."/>
            <person name="Kanapin A."/>
            <person name="Katoh M."/>
            <person name="Kawasawa Y."/>
            <person name="Kelso J."/>
            <person name="Kitamura H."/>
            <person name="Kitano H."/>
            <person name="Kollias G."/>
            <person name="Krishnan S.P."/>
            <person name="Kruger A."/>
            <person name="Kummerfeld S.K."/>
            <person name="Kurochkin I.V."/>
            <person name="Lareau L.F."/>
            <person name="Lazarevic D."/>
            <person name="Lipovich L."/>
            <person name="Liu J."/>
            <person name="Liuni S."/>
            <person name="McWilliam S."/>
            <person name="Madan Babu M."/>
            <person name="Madera M."/>
            <person name="Marchionni L."/>
            <person name="Matsuda H."/>
            <person name="Matsuzawa S."/>
            <person name="Miki H."/>
            <person name="Mignone F."/>
            <person name="Miyake S."/>
            <person name="Morris K."/>
            <person name="Mottagui-Tabar S."/>
            <person name="Mulder N."/>
            <person name="Nakano N."/>
            <person name="Nakauchi H."/>
            <person name="Ng P."/>
            <person name="Nilsson R."/>
            <person name="Nishiguchi S."/>
            <person name="Nishikawa S."/>
            <person name="Nori F."/>
            <person name="Ohara O."/>
            <person name="Okazaki Y."/>
            <person name="Orlando V."/>
            <person name="Pang K.C."/>
            <person name="Pavan W.J."/>
            <person name="Pavesi G."/>
            <person name="Pesole G."/>
            <person name="Petrovsky N."/>
            <person name="Piazza S."/>
            <person name="Reed J."/>
            <person name="Reid J.F."/>
            <person name="Ring B.Z."/>
            <person name="Ringwald M."/>
            <person name="Rost B."/>
            <person name="Ruan Y."/>
            <person name="Salzberg S.L."/>
            <person name="Sandelin A."/>
            <person name="Schneider C."/>
            <person name="Schoenbach C."/>
            <person name="Sekiguchi K."/>
            <person name="Semple C.A."/>
            <person name="Seno S."/>
            <person name="Sessa L."/>
            <person name="Sheng Y."/>
            <person name="Shibata Y."/>
            <person name="Shimada H."/>
            <person name="Shimada K."/>
            <person name="Silva D."/>
            <person name="Sinclair B."/>
            <person name="Sperling S."/>
            <person name="Stupka E."/>
            <person name="Sugiura K."/>
            <person name="Sultana R."/>
            <person name="Takenaka Y."/>
            <person name="Taki K."/>
            <person name="Tammoja K."/>
            <person name="Tan S.L."/>
            <person name="Tang S."/>
            <person name="Taylor M.S."/>
            <person name="Tegner J."/>
            <person name="Teichmann S.A."/>
            <person name="Ueda H.R."/>
            <person name="van Nimwegen E."/>
            <person name="Verardo R."/>
            <person name="Wei C.L."/>
            <person name="Yagi K."/>
            <person name="Yamanishi H."/>
            <person name="Zabarovsky E."/>
            <person name="Zhu S."/>
            <person name="Zimmer A."/>
            <person name="Hide W."/>
            <person name="Bult C."/>
            <person name="Grimmond S.M."/>
            <person name="Teasdale R.D."/>
            <person name="Liu E.T."/>
            <person name="Brusic V."/>
            <person name="Quackenbush J."/>
            <person name="Wahlestedt C."/>
            <person name="Mattick J.S."/>
            <person name="Hume D.A."/>
            <person name="Kai C."/>
            <person name="Sasaki D."/>
            <person name="Tomaru Y."/>
            <person name="Fukuda S."/>
            <person name="Kanamori-Katayama M."/>
            <person name="Suzuki M."/>
            <person name="Aoki J."/>
            <person name="Arakawa T."/>
            <person name="Iida J."/>
            <person name="Imamura K."/>
            <person name="Itoh M."/>
            <person name="Kato T."/>
            <person name="Kawaji H."/>
            <person name="Kawagashira N."/>
            <person name="Kawashima T."/>
            <person name="Kojima M."/>
            <person name="Kondo S."/>
            <person name="Konno H."/>
            <person name="Nakano K."/>
            <person name="Ninomiya N."/>
            <person name="Nishio T."/>
            <person name="Okada M."/>
            <person name="Plessy C."/>
            <person name="Shibata K."/>
            <person name="Shiraki T."/>
            <person name="Suzuki S."/>
            <person name="Tagami M."/>
            <person name="Waki K."/>
            <person name="Watahiki A."/>
            <person name="Okamura-Oho Y."/>
            <person name="Suzuki H."/>
            <person name="Kawai J."/>
            <person name="Hayashizaki Y."/>
        </authorList>
    </citation>
    <scope>NUCLEOTIDE SEQUENCE [LARGE SCALE MRNA]</scope>
    <source>
        <strain>C57BL/6J</strain>
        <tissue>Cerebellum</tissue>
    </source>
</reference>
<reference key="3">
    <citation type="journal article" date="2004" name="Genome Res.">
        <title>The status, quality, and expansion of the NIH full-length cDNA project: the Mammalian Gene Collection (MGC).</title>
        <authorList>
            <consortium name="The MGC Project Team"/>
        </authorList>
    </citation>
    <scope>NUCLEOTIDE SEQUENCE [LARGE SCALE MRNA]</scope>
    <source>
        <strain>FVB/N-3</strain>
        <tissue>Mammary gland</tissue>
    </source>
</reference>
<name>AP4S1_MOUSE</name>
<gene>
    <name evidence="3" type="primary">Ap4s1</name>
</gene>